<feature type="chain" id="PRO_1000006592" description="Cysteine--tRNA ligase">
    <location>
        <begin position="1"/>
        <end position="476"/>
    </location>
</feature>
<feature type="short sequence motif" description="'HIGH' region">
    <location>
        <begin position="30"/>
        <end position="40"/>
    </location>
</feature>
<feature type="short sequence motif" description="'KMSKS' region">
    <location>
        <begin position="265"/>
        <end position="269"/>
    </location>
</feature>
<feature type="binding site" evidence="1">
    <location>
        <position position="28"/>
    </location>
    <ligand>
        <name>Zn(2+)</name>
        <dbReference type="ChEBI" id="CHEBI:29105"/>
    </ligand>
</feature>
<feature type="binding site" evidence="1">
    <location>
        <position position="208"/>
    </location>
    <ligand>
        <name>Zn(2+)</name>
        <dbReference type="ChEBI" id="CHEBI:29105"/>
    </ligand>
</feature>
<feature type="binding site" evidence="1">
    <location>
        <position position="233"/>
    </location>
    <ligand>
        <name>Zn(2+)</name>
        <dbReference type="ChEBI" id="CHEBI:29105"/>
    </ligand>
</feature>
<feature type="binding site" evidence="1">
    <location>
        <position position="237"/>
    </location>
    <ligand>
        <name>Zn(2+)</name>
        <dbReference type="ChEBI" id="CHEBI:29105"/>
    </ligand>
</feature>
<feature type="binding site" evidence="1">
    <location>
        <position position="268"/>
    </location>
    <ligand>
        <name>ATP</name>
        <dbReference type="ChEBI" id="CHEBI:30616"/>
    </ligand>
</feature>
<accession>A6VG07</accession>
<proteinExistence type="inferred from homology"/>
<protein>
    <recommendedName>
        <fullName evidence="1">Cysteine--tRNA ligase</fullName>
        <ecNumber evidence="1">6.1.1.16</ecNumber>
    </recommendedName>
    <alternativeName>
        <fullName evidence="1">Cysteinyl-tRNA synthetase</fullName>
        <shortName evidence="1">CysRS</shortName>
    </alternativeName>
</protein>
<gene>
    <name evidence="1" type="primary">cysS</name>
    <name type="ordered locus">MmarC7_0313</name>
</gene>
<dbReference type="EC" id="6.1.1.16" evidence="1"/>
<dbReference type="EMBL" id="CP000745">
    <property type="protein sequence ID" value="ABR65383.1"/>
    <property type="molecule type" value="Genomic_DNA"/>
</dbReference>
<dbReference type="SMR" id="A6VG07"/>
<dbReference type="STRING" id="426368.MmarC7_0313"/>
<dbReference type="KEGG" id="mmz:MmarC7_0313"/>
<dbReference type="eggNOG" id="arCOG00486">
    <property type="taxonomic scope" value="Archaea"/>
</dbReference>
<dbReference type="HOGENOM" id="CLU_013528_0_1_2"/>
<dbReference type="OrthoDB" id="9445at2157"/>
<dbReference type="GO" id="GO:0005737">
    <property type="term" value="C:cytoplasm"/>
    <property type="evidence" value="ECO:0007669"/>
    <property type="project" value="UniProtKB-SubCell"/>
</dbReference>
<dbReference type="GO" id="GO:0005524">
    <property type="term" value="F:ATP binding"/>
    <property type="evidence" value="ECO:0007669"/>
    <property type="project" value="UniProtKB-UniRule"/>
</dbReference>
<dbReference type="GO" id="GO:0004817">
    <property type="term" value="F:cysteine-tRNA ligase activity"/>
    <property type="evidence" value="ECO:0007669"/>
    <property type="project" value="UniProtKB-UniRule"/>
</dbReference>
<dbReference type="GO" id="GO:0008270">
    <property type="term" value="F:zinc ion binding"/>
    <property type="evidence" value="ECO:0007669"/>
    <property type="project" value="UniProtKB-UniRule"/>
</dbReference>
<dbReference type="GO" id="GO:0006423">
    <property type="term" value="P:cysteinyl-tRNA aminoacylation"/>
    <property type="evidence" value="ECO:0007669"/>
    <property type="project" value="UniProtKB-UniRule"/>
</dbReference>
<dbReference type="CDD" id="cd00672">
    <property type="entry name" value="CysRS_core"/>
    <property type="match status" value="1"/>
</dbReference>
<dbReference type="FunFam" id="3.40.50.620:FF:000009">
    <property type="entry name" value="Cysteine--tRNA ligase"/>
    <property type="match status" value="1"/>
</dbReference>
<dbReference type="Gene3D" id="1.20.120.1910">
    <property type="entry name" value="Cysteine-tRNA ligase, C-terminal anti-codon recognition domain"/>
    <property type="match status" value="1"/>
</dbReference>
<dbReference type="Gene3D" id="3.40.50.620">
    <property type="entry name" value="HUPs"/>
    <property type="match status" value="1"/>
</dbReference>
<dbReference type="HAMAP" id="MF_00041">
    <property type="entry name" value="Cys_tRNA_synth"/>
    <property type="match status" value="1"/>
</dbReference>
<dbReference type="InterPro" id="IPR015803">
    <property type="entry name" value="Cys-tRNA-ligase"/>
</dbReference>
<dbReference type="InterPro" id="IPR015273">
    <property type="entry name" value="Cys-tRNA-synt_Ia_DALR"/>
</dbReference>
<dbReference type="InterPro" id="IPR024909">
    <property type="entry name" value="Cys-tRNA/MSH_ligase"/>
</dbReference>
<dbReference type="InterPro" id="IPR014729">
    <property type="entry name" value="Rossmann-like_a/b/a_fold"/>
</dbReference>
<dbReference type="InterPro" id="IPR032678">
    <property type="entry name" value="tRNA-synt_1_cat_dom"/>
</dbReference>
<dbReference type="InterPro" id="IPR009080">
    <property type="entry name" value="tRNAsynth_Ia_anticodon-bd"/>
</dbReference>
<dbReference type="NCBIfam" id="TIGR00435">
    <property type="entry name" value="cysS"/>
    <property type="match status" value="1"/>
</dbReference>
<dbReference type="PANTHER" id="PTHR10890:SF3">
    <property type="entry name" value="CYSTEINE--TRNA LIGASE, CYTOPLASMIC"/>
    <property type="match status" value="1"/>
</dbReference>
<dbReference type="PANTHER" id="PTHR10890">
    <property type="entry name" value="CYSTEINYL-TRNA SYNTHETASE"/>
    <property type="match status" value="1"/>
</dbReference>
<dbReference type="Pfam" id="PF09190">
    <property type="entry name" value="DALR_2"/>
    <property type="match status" value="1"/>
</dbReference>
<dbReference type="Pfam" id="PF01406">
    <property type="entry name" value="tRNA-synt_1e"/>
    <property type="match status" value="1"/>
</dbReference>
<dbReference type="PRINTS" id="PR00983">
    <property type="entry name" value="TRNASYNTHCYS"/>
</dbReference>
<dbReference type="SMART" id="SM00840">
    <property type="entry name" value="DALR_2"/>
    <property type="match status" value="1"/>
</dbReference>
<dbReference type="SUPFAM" id="SSF47323">
    <property type="entry name" value="Anticodon-binding domain of a subclass of class I aminoacyl-tRNA synthetases"/>
    <property type="match status" value="1"/>
</dbReference>
<dbReference type="SUPFAM" id="SSF52374">
    <property type="entry name" value="Nucleotidylyl transferase"/>
    <property type="match status" value="1"/>
</dbReference>
<reference key="1">
    <citation type="submission" date="2007-06" db="EMBL/GenBank/DDBJ databases">
        <title>Complete sequence of Methanococcus maripaludis C7.</title>
        <authorList>
            <consortium name="US DOE Joint Genome Institute"/>
            <person name="Copeland A."/>
            <person name="Lucas S."/>
            <person name="Lapidus A."/>
            <person name="Barry K."/>
            <person name="Glavina del Rio T."/>
            <person name="Dalin E."/>
            <person name="Tice H."/>
            <person name="Pitluck S."/>
            <person name="Clum A."/>
            <person name="Schmutz J."/>
            <person name="Larimer F."/>
            <person name="Land M."/>
            <person name="Hauser L."/>
            <person name="Kyrpides N."/>
            <person name="Anderson I."/>
            <person name="Sieprawska-Lupa M."/>
            <person name="Whitman W.B."/>
            <person name="Richardson P."/>
        </authorList>
    </citation>
    <scope>NUCLEOTIDE SEQUENCE [LARGE SCALE GENOMIC DNA]</scope>
    <source>
        <strain>C7 / ATCC BAA-1331</strain>
    </source>
</reference>
<organism>
    <name type="scientific">Methanococcus maripaludis (strain C7 / ATCC BAA-1331)</name>
    <dbReference type="NCBI Taxonomy" id="426368"/>
    <lineage>
        <taxon>Archaea</taxon>
        <taxon>Methanobacteriati</taxon>
        <taxon>Methanobacteriota</taxon>
        <taxon>Methanomada group</taxon>
        <taxon>Methanococci</taxon>
        <taxon>Methanococcales</taxon>
        <taxon>Methanococcaceae</taxon>
        <taxon>Methanococcus</taxon>
    </lineage>
</organism>
<evidence type="ECO:0000255" key="1">
    <source>
        <dbReference type="HAMAP-Rule" id="MF_00041"/>
    </source>
</evidence>
<comment type="catalytic activity">
    <reaction evidence="1">
        <text>tRNA(Cys) + L-cysteine + ATP = L-cysteinyl-tRNA(Cys) + AMP + diphosphate</text>
        <dbReference type="Rhea" id="RHEA:17773"/>
        <dbReference type="Rhea" id="RHEA-COMP:9661"/>
        <dbReference type="Rhea" id="RHEA-COMP:9679"/>
        <dbReference type="ChEBI" id="CHEBI:30616"/>
        <dbReference type="ChEBI" id="CHEBI:33019"/>
        <dbReference type="ChEBI" id="CHEBI:35235"/>
        <dbReference type="ChEBI" id="CHEBI:78442"/>
        <dbReference type="ChEBI" id="CHEBI:78517"/>
        <dbReference type="ChEBI" id="CHEBI:456215"/>
        <dbReference type="EC" id="6.1.1.16"/>
    </reaction>
</comment>
<comment type="cofactor">
    <cofactor evidence="1">
        <name>Zn(2+)</name>
        <dbReference type="ChEBI" id="CHEBI:29105"/>
    </cofactor>
    <text evidence="1">Binds 1 zinc ion per subunit.</text>
</comment>
<comment type="subcellular location">
    <subcellularLocation>
        <location evidence="1">Cytoplasm</location>
    </subcellularLocation>
</comment>
<comment type="similarity">
    <text evidence="1">Belongs to the class-I aminoacyl-tRNA synthetase family.</text>
</comment>
<name>SYC_METM7</name>
<keyword id="KW-0030">Aminoacyl-tRNA synthetase</keyword>
<keyword id="KW-0067">ATP-binding</keyword>
<keyword id="KW-0963">Cytoplasm</keyword>
<keyword id="KW-0436">Ligase</keyword>
<keyword id="KW-0479">Metal-binding</keyword>
<keyword id="KW-0547">Nucleotide-binding</keyword>
<keyword id="KW-0648">Protein biosynthesis</keyword>
<keyword id="KW-0862">Zinc</keyword>
<sequence length="476" mass="55327">MLKVYNTLTRKEEEFKPLNENEVKMYVCGPTVYDHTHLGHGRTYVSFDIIRRYLEHIGYTVNLVINFTDIDDKIIKRSQEKGKNPKELSETFVNVFLNDMATLKVKPADIYPKVTEHIPEIIAFIEKLIEKGFAYKTENGVYFEVKKFENYGKLSNINLEDLISGARIEPSDEKKNPEDFALWKTAKPGEPKWESPFGEGRPGWHIECSAMSSKYLGEQFDIHGGGRDLSFPHHENEIAQSVAYSGKDWVNYWLHTGFVMVNGEKMSKSLGNFITIEDISKEYDPEILRFFFIQRHYRSPIDYTAESMSHVKNNLEKIYNVIENIRISLEKSEKSGIWNENEFLLYDILKNSKHNFYEAMNSDFNTVEALKSVFEVSNGVNKYLSLVKTPSEGLLLKAFDFFKIVGEIFGLFENYFKESSESNDEGFVKFLIELRSDLRLQKNYEMSDKIRDGLKELGYQIEDNPKEGTVFKKINI</sequence>